<name>CYFP2_XENLA</name>
<sequence length="1253" mass="145638">MTTHVTLEDALSNVDLLEELPLPDQQPCIEPPPSSIMYQANFDTNFEDRNAFVTGIARYIEQATVHSSMNEMLEEGQEYAVMLYTWRSCSRAIPQVKCNEQPNRVEIYEKTVEVLEPEVTKLMKFMYFQRKAIERFCNEVKRLCHTERRKDFVSEAYLLTLGKFINMFAVLDELKNMKCSVKNDHSAYKRAAQFLRKMADPQSIQESQNLSMFLANHNRITQCLHQQLEVIPGYEELLADIVNICVDYYENKMYLTPSEKHMLLKVMGFGLYLMDGNVSNIYKLDAKKRINLSKIDKFFKQLQVVPLFGDMQIELARYIETSAHYEENKSKWTCTQSSISPQYNICEQMVQIRDDHIRFISELARYSNSEVVTGSGLDSQKSDEEYRELFDLALRGLQLLSKWSAHVMEVYSWKLVHPTDKFCNKDCPGTAEEYERATRYNYTSEEKFAFVEVIAMVKGLQVLMGRMESVFNQAIRNTIYAALQDFAQSSLREPLRQAVRKKKNVLISVLQAIRKTVCDWEAGREPPNDPCLRGEKDPKGGFDINVPRRAVGPSSTQLYMVRTMLESLIADKSGSKKTLRSSLDGPIVQAIEEFHKQSFFFTHLLNFSEALQQCCDLSQLWFREFFLELTMGRRIQFPIEMSMPWILTDHILETKEPSMMEYVLYPLDLYNDSAYYALTKFKKQFLYDEIEAEVNLCFDQFVYKLSDQIFAYYKAMSGSVLLDKRFRAECKNYGVIIPYPPSNRYETLLKQRHVQLLGRSIDLNRLITQRISAAMYKSLDQAISRFESEDLTSIVELEWLLDINRLTHRLLSKHLTLDSFDAMFREANHNVSAPYGRNTLHVFWELNFDFLPNYCYNGSTNRFVRTAIPFTQEPQRDKPANVQPYYLYGSKPLNIAYSHIYSSYRNFVGPPHFKTICRLLGYQGIAVVMEELLKIVKSLLQGTVLQYVKTLIEVMPKICRLPRHEYGSPGILEFFHHQLKDIIEYAELKTDVFQSLREVGNAILFCLLIEQALSQEEVCDLLHAAPFQNILPRVYIKEGERLEVRMKRLEAKYAPLHLVPLIERLGTPQQIAIAREGDLLTKERLCCGLSMFEVILTRIRSYLQDPIWRGPPPTNGVMHVDECVELHRLWSAMQFVYCIPVGTNEFTAEQCFGDGLNWAGCAIIVLLGQQRRFDLFDFCYHLLKVQRQDGKDEIIKNVPLKKMADRIRKYQILNNEIFAVLNKYMKSVESDSSTVEHVRCFQPPIHQSLATTC</sequence>
<comment type="function">
    <text evidence="1 2">Involved in T-cell adhesion and p53-dependent induction of apoptosis. Does not bind RNA (By similarity).</text>
</comment>
<comment type="subcellular location">
    <subcellularLocation>
        <location evidence="2">Cytoplasm</location>
    </subcellularLocation>
</comment>
<comment type="similarity">
    <text evidence="3">Belongs to the CYFIP family.</text>
</comment>
<keyword id="KW-0053">Apoptosis</keyword>
<keyword id="KW-0130">Cell adhesion</keyword>
<keyword id="KW-0963">Cytoplasm</keyword>
<keyword id="KW-1185">Reference proteome</keyword>
<keyword id="KW-0691">RNA editing</keyword>
<gene>
    <name type="primary">cyfip2</name>
</gene>
<evidence type="ECO:0000250" key="1">
    <source>
        <dbReference type="UniProtKB" id="Q5SQX6"/>
    </source>
</evidence>
<evidence type="ECO:0000250" key="2">
    <source>
        <dbReference type="UniProtKB" id="Q96F07"/>
    </source>
</evidence>
<evidence type="ECO:0000255" key="3"/>
<evidence type="ECO:0000312" key="4">
    <source>
        <dbReference type="EMBL" id="AAH72814.1"/>
    </source>
</evidence>
<reference evidence="4" key="1">
    <citation type="submission" date="2004-06" db="EMBL/GenBank/DDBJ databases">
        <authorList>
            <consortium name="NIH - Xenopus Gene Collection (XGC) project"/>
        </authorList>
    </citation>
    <scope>NUCLEOTIDE SEQUENCE [LARGE SCALE MRNA]</scope>
    <source>
        <tissue evidence="4">Embryo</tissue>
    </source>
</reference>
<organism>
    <name type="scientific">Xenopus laevis</name>
    <name type="common">African clawed frog</name>
    <dbReference type="NCBI Taxonomy" id="8355"/>
    <lineage>
        <taxon>Eukaryota</taxon>
        <taxon>Metazoa</taxon>
        <taxon>Chordata</taxon>
        <taxon>Craniata</taxon>
        <taxon>Vertebrata</taxon>
        <taxon>Euteleostomi</taxon>
        <taxon>Amphibia</taxon>
        <taxon>Batrachia</taxon>
        <taxon>Anura</taxon>
        <taxon>Pipoidea</taxon>
        <taxon>Pipidae</taxon>
        <taxon>Xenopodinae</taxon>
        <taxon>Xenopus</taxon>
        <taxon>Xenopus</taxon>
    </lineage>
</organism>
<accession>Q6GQD1</accession>
<feature type="chain" id="PRO_0000279712" description="Cytoplasmic FMR1-interacting protein 2">
    <location>
        <begin position="1"/>
        <end position="1253"/>
    </location>
</feature>
<protein>
    <recommendedName>
        <fullName>Cytoplasmic FMR1-interacting protein 2</fullName>
    </recommendedName>
</protein>
<dbReference type="EMBL" id="BC072814">
    <property type="protein sequence ID" value="AAH72814.1"/>
    <property type="molecule type" value="mRNA"/>
</dbReference>
<dbReference type="RefSeq" id="NP_001085471.1">
    <property type="nucleotide sequence ID" value="NM_001092002.1"/>
</dbReference>
<dbReference type="SMR" id="Q6GQD1"/>
<dbReference type="DNASU" id="443897"/>
<dbReference type="GeneID" id="443897"/>
<dbReference type="KEGG" id="xla:443897"/>
<dbReference type="AGR" id="Xenbase:XB-GENE-922706"/>
<dbReference type="CTD" id="443897"/>
<dbReference type="Xenbase" id="XB-GENE-922706">
    <property type="gene designation" value="cyfip2.S"/>
</dbReference>
<dbReference type="OrthoDB" id="10265867at2759"/>
<dbReference type="Proteomes" id="UP000186698">
    <property type="component" value="Chromosome 3S"/>
</dbReference>
<dbReference type="Bgee" id="443897">
    <property type="expression patterns" value="Expressed in brain and 20 other cell types or tissues"/>
</dbReference>
<dbReference type="GO" id="GO:0005737">
    <property type="term" value="C:cytoplasm"/>
    <property type="evidence" value="ECO:0007669"/>
    <property type="project" value="UniProtKB-SubCell"/>
</dbReference>
<dbReference type="GO" id="GO:0043005">
    <property type="term" value="C:neuron projection"/>
    <property type="evidence" value="ECO:0000318"/>
    <property type="project" value="GO_Central"/>
</dbReference>
<dbReference type="GO" id="GO:0045202">
    <property type="term" value="C:synapse"/>
    <property type="evidence" value="ECO:0000318"/>
    <property type="project" value="GO_Central"/>
</dbReference>
<dbReference type="GO" id="GO:0031267">
    <property type="term" value="F:small GTPase binding"/>
    <property type="evidence" value="ECO:0007669"/>
    <property type="project" value="InterPro"/>
</dbReference>
<dbReference type="GO" id="GO:0006915">
    <property type="term" value="P:apoptotic process"/>
    <property type="evidence" value="ECO:0000318"/>
    <property type="project" value="GO_Central"/>
</dbReference>
<dbReference type="GO" id="GO:0007411">
    <property type="term" value="P:axon guidance"/>
    <property type="evidence" value="ECO:0000318"/>
    <property type="project" value="GO_Central"/>
</dbReference>
<dbReference type="GO" id="GO:0007155">
    <property type="term" value="P:cell adhesion"/>
    <property type="evidence" value="ECO:0007669"/>
    <property type="project" value="UniProtKB-KW"/>
</dbReference>
<dbReference type="GO" id="GO:0000902">
    <property type="term" value="P:cell morphogenesis"/>
    <property type="evidence" value="ECO:0000318"/>
    <property type="project" value="GO_Central"/>
</dbReference>
<dbReference type="GO" id="GO:0030031">
    <property type="term" value="P:cell projection assembly"/>
    <property type="evidence" value="ECO:0000318"/>
    <property type="project" value="GO_Central"/>
</dbReference>
<dbReference type="GO" id="GO:0030833">
    <property type="term" value="P:regulation of actin filament polymerization"/>
    <property type="evidence" value="ECO:0007669"/>
    <property type="project" value="InterPro"/>
</dbReference>
<dbReference type="InterPro" id="IPR009828">
    <property type="entry name" value="CYRIA/CYRIB_Rac1-bd"/>
</dbReference>
<dbReference type="InterPro" id="IPR008081">
    <property type="entry name" value="Cytoplasmic_FMR1-int"/>
</dbReference>
<dbReference type="PANTHER" id="PTHR12195">
    <property type="entry name" value="CYTOPLASMIC FMR1-INTERACTING PROTEIN-RELATED"/>
    <property type="match status" value="1"/>
</dbReference>
<dbReference type="Pfam" id="PF07159">
    <property type="entry name" value="CYRIA-B_Rac1-bd"/>
    <property type="match status" value="1"/>
</dbReference>
<dbReference type="Pfam" id="PF05994">
    <property type="entry name" value="FragX_IP"/>
    <property type="match status" value="1"/>
</dbReference>
<dbReference type="PIRSF" id="PIRSF008153">
    <property type="entry name" value="FMR1_interacting"/>
    <property type="match status" value="1"/>
</dbReference>
<dbReference type="PRINTS" id="PR01698">
    <property type="entry name" value="CYTOFMRPINTP"/>
</dbReference>
<proteinExistence type="evidence at transcript level"/>